<keyword id="KW-0328">Glycosyltransferase</keyword>
<keyword id="KW-0808">Transferase</keyword>
<name>OTSA_MYCA1</name>
<protein>
    <recommendedName>
        <fullName evidence="2">Trehalose-6-phosphate synthase</fullName>
        <shortName evidence="2">TPS</shortName>
        <ecNumber evidence="2">2.4.1.15</ecNumber>
        <ecNumber evidence="2">2.4.1.347</ecNumber>
    </recommendedName>
    <alternativeName>
        <fullName evidence="2">Alpha,alpha-trehalose-phosphate synthase [UDP-forming]</fullName>
    </alternativeName>
    <alternativeName>
        <fullName evidence="1">Osmoregulatory trehalose synthesis protein A</fullName>
        <shortName evidence="1">OtsA</shortName>
    </alternativeName>
</protein>
<organism>
    <name type="scientific">Mycobacterium avium (strain 104)</name>
    <dbReference type="NCBI Taxonomy" id="243243"/>
    <lineage>
        <taxon>Bacteria</taxon>
        <taxon>Bacillati</taxon>
        <taxon>Actinomycetota</taxon>
        <taxon>Actinomycetes</taxon>
        <taxon>Mycobacteriales</taxon>
        <taxon>Mycobacteriaceae</taxon>
        <taxon>Mycobacterium</taxon>
        <taxon>Mycobacterium avium complex (MAC)</taxon>
    </lineage>
</organism>
<feature type="chain" id="PRO_0000348903" description="Trehalose-6-phosphate synthase">
    <location>
        <begin position="1"/>
        <end position="492"/>
    </location>
</feature>
<feature type="binding site" evidence="1">
    <location>
        <position position="25"/>
    </location>
    <ligand>
        <name>D-glucose 6-phosphate</name>
        <dbReference type="ChEBI" id="CHEBI:61548"/>
    </ligand>
</feature>
<feature type="binding site" evidence="1">
    <location>
        <begin position="45"/>
        <end position="46"/>
    </location>
    <ligand>
        <name>UDP-alpha-D-glucose</name>
        <dbReference type="ChEBI" id="CHEBI:58885"/>
    </ligand>
</feature>
<feature type="binding site" evidence="1">
    <location>
        <position position="101"/>
    </location>
    <ligand>
        <name>D-glucose 6-phosphate</name>
        <dbReference type="ChEBI" id="CHEBI:61548"/>
    </ligand>
</feature>
<feature type="binding site" evidence="1">
    <location>
        <position position="155"/>
    </location>
    <ligand>
        <name>D-glucose 6-phosphate</name>
        <dbReference type="ChEBI" id="CHEBI:61548"/>
    </ligand>
</feature>
<feature type="binding site" evidence="1">
    <location>
        <position position="297"/>
    </location>
    <ligand>
        <name>UDP-alpha-D-glucose</name>
        <dbReference type="ChEBI" id="CHEBI:58885"/>
    </ligand>
</feature>
<feature type="binding site" evidence="1">
    <location>
        <position position="302"/>
    </location>
    <ligand>
        <name>UDP-alpha-D-glucose</name>
        <dbReference type="ChEBI" id="CHEBI:58885"/>
    </ligand>
</feature>
<feature type="binding site" evidence="1">
    <location>
        <position position="335"/>
    </location>
    <ligand>
        <name>D-glucose 6-phosphate</name>
        <dbReference type="ChEBI" id="CHEBI:61548"/>
    </ligand>
</feature>
<feature type="binding site" evidence="1">
    <location>
        <begin position="400"/>
        <end position="404"/>
    </location>
    <ligand>
        <name>UDP-alpha-D-glucose</name>
        <dbReference type="ChEBI" id="CHEBI:58885"/>
    </ligand>
</feature>
<feature type="site" description="Involved in alpha anomer selectivity" evidence="1">
    <location>
        <position position="110"/>
    </location>
</feature>
<feature type="site" description="Involved in alpha anomer selectivity" evidence="1">
    <location>
        <position position="180"/>
    </location>
</feature>
<dbReference type="EC" id="2.4.1.15" evidence="2"/>
<dbReference type="EC" id="2.4.1.347" evidence="2"/>
<dbReference type="EMBL" id="CP000479">
    <property type="protein sequence ID" value="ABK67904.1"/>
    <property type="molecule type" value="Genomic_DNA"/>
</dbReference>
<dbReference type="RefSeq" id="WP_009974848.1">
    <property type="nucleotide sequence ID" value="NC_008595.1"/>
</dbReference>
<dbReference type="SMR" id="A0QAK7"/>
<dbReference type="CAZy" id="GT20">
    <property type="family name" value="Glycosyltransferase Family 20"/>
</dbReference>
<dbReference type="KEGG" id="mav:MAV_0666"/>
<dbReference type="HOGENOM" id="CLU_002351_7_1_11"/>
<dbReference type="UniPathway" id="UPA00299"/>
<dbReference type="Proteomes" id="UP000001574">
    <property type="component" value="Chromosome"/>
</dbReference>
<dbReference type="GO" id="GO:0005829">
    <property type="term" value="C:cytosol"/>
    <property type="evidence" value="ECO:0007669"/>
    <property type="project" value="TreeGrafter"/>
</dbReference>
<dbReference type="GO" id="GO:0047260">
    <property type="term" value="F:alpha,alpha-trehalose-phosphate synthase (GDP-forming) activity"/>
    <property type="evidence" value="ECO:0007669"/>
    <property type="project" value="RHEA"/>
</dbReference>
<dbReference type="GO" id="GO:0003825">
    <property type="term" value="F:alpha,alpha-trehalose-phosphate synthase (UDP-forming) activity"/>
    <property type="evidence" value="ECO:0007669"/>
    <property type="project" value="UniProtKB-EC"/>
</dbReference>
<dbReference type="GO" id="GO:0004805">
    <property type="term" value="F:trehalose-phosphatase activity"/>
    <property type="evidence" value="ECO:0007669"/>
    <property type="project" value="TreeGrafter"/>
</dbReference>
<dbReference type="GO" id="GO:0005992">
    <property type="term" value="P:trehalose biosynthetic process"/>
    <property type="evidence" value="ECO:0007669"/>
    <property type="project" value="UniProtKB-UniPathway"/>
</dbReference>
<dbReference type="CDD" id="cd03788">
    <property type="entry name" value="GT20_TPS"/>
    <property type="match status" value="1"/>
</dbReference>
<dbReference type="FunFam" id="3.40.50.2000:FF:000102">
    <property type="entry name" value="Trehalose-6-phosphate synthase"/>
    <property type="match status" value="1"/>
</dbReference>
<dbReference type="Gene3D" id="3.40.50.2000">
    <property type="entry name" value="Glycogen Phosphorylase B"/>
    <property type="match status" value="2"/>
</dbReference>
<dbReference type="InterPro" id="IPR001830">
    <property type="entry name" value="Glyco_trans_20"/>
</dbReference>
<dbReference type="PANTHER" id="PTHR10788:SF106">
    <property type="entry name" value="BCDNA.GH08860"/>
    <property type="match status" value="1"/>
</dbReference>
<dbReference type="PANTHER" id="PTHR10788">
    <property type="entry name" value="TREHALOSE-6-PHOSPHATE SYNTHASE"/>
    <property type="match status" value="1"/>
</dbReference>
<dbReference type="Pfam" id="PF00982">
    <property type="entry name" value="Glyco_transf_20"/>
    <property type="match status" value="1"/>
</dbReference>
<dbReference type="SUPFAM" id="SSF53756">
    <property type="entry name" value="UDP-Glycosyltransferase/glycogen phosphorylase"/>
    <property type="match status" value="1"/>
</dbReference>
<proteinExistence type="inferred from homology"/>
<comment type="function">
    <text evidence="2">Probably involved in the osmoprotection via the biosynthesis of trehalose and in the production of glycogen and alpha-glucan via the TreS-Pep2 branch involved in the biosynthesis of maltose-1-phosphate (M1P). Catalyzes the transfer of glucose from UDP-glucose (UDP-Glc) to D-glucose 6-phosphate (Glc-6-P) to form trehalose-6-phosphate. Probably also able to use ADP-Glc, CDP-Glc, GDP-Glc and TDP-Glc as glucosyl donors.</text>
</comment>
<comment type="catalytic activity">
    <reaction evidence="2">
        <text>ADP-alpha-D-glucose + D-glucose 6-phosphate = alpha,alpha-trehalose 6-phosphate + ADP + H(+)</text>
        <dbReference type="Rhea" id="RHEA:53880"/>
        <dbReference type="ChEBI" id="CHEBI:15378"/>
        <dbReference type="ChEBI" id="CHEBI:57498"/>
        <dbReference type="ChEBI" id="CHEBI:58429"/>
        <dbReference type="ChEBI" id="CHEBI:61548"/>
        <dbReference type="ChEBI" id="CHEBI:456216"/>
        <dbReference type="EC" id="2.4.1.347"/>
    </reaction>
</comment>
<comment type="catalytic activity">
    <reaction evidence="2">
        <text>CDP-alpha-D-glucose + D-glucose 6-phosphate = alpha,alpha-trehalose 6-phosphate + CDP + H(+)</text>
        <dbReference type="Rhea" id="RHEA:53884"/>
        <dbReference type="ChEBI" id="CHEBI:15378"/>
        <dbReference type="ChEBI" id="CHEBI:58069"/>
        <dbReference type="ChEBI" id="CHEBI:58429"/>
        <dbReference type="ChEBI" id="CHEBI:61548"/>
        <dbReference type="ChEBI" id="CHEBI:137927"/>
    </reaction>
</comment>
<comment type="catalytic activity">
    <reaction evidence="2">
        <text>GDP-alpha-D-glucose + D-glucose 6-phosphate = alpha,alpha-trehalose 6-phosphate + GDP + H(+)</text>
        <dbReference type="Rhea" id="RHEA:14605"/>
        <dbReference type="ChEBI" id="CHEBI:15378"/>
        <dbReference type="ChEBI" id="CHEBI:58189"/>
        <dbReference type="ChEBI" id="CHEBI:58429"/>
        <dbReference type="ChEBI" id="CHEBI:61548"/>
        <dbReference type="ChEBI" id="CHEBI:62230"/>
    </reaction>
</comment>
<comment type="catalytic activity">
    <reaction evidence="2">
        <text>TDP-alpha-D-glucose + D-glucose 6-phosphate = 5-methyl-UDP + alpha,alpha-trehalose 6-phosphate + H(+)</text>
        <dbReference type="Rhea" id="RHEA:53888"/>
        <dbReference type="ChEBI" id="CHEBI:15378"/>
        <dbReference type="ChEBI" id="CHEBI:58429"/>
        <dbReference type="ChEBI" id="CHEBI:61417"/>
        <dbReference type="ChEBI" id="CHEBI:61548"/>
        <dbReference type="ChEBI" id="CHEBI:137931"/>
    </reaction>
</comment>
<comment type="catalytic activity">
    <reaction evidence="2">
        <text>D-glucose 6-phosphate + UDP-alpha-D-glucose = alpha,alpha-trehalose 6-phosphate + UDP + H(+)</text>
        <dbReference type="Rhea" id="RHEA:18889"/>
        <dbReference type="ChEBI" id="CHEBI:15378"/>
        <dbReference type="ChEBI" id="CHEBI:58223"/>
        <dbReference type="ChEBI" id="CHEBI:58429"/>
        <dbReference type="ChEBI" id="CHEBI:58885"/>
        <dbReference type="ChEBI" id="CHEBI:61548"/>
        <dbReference type="EC" id="2.4.1.15"/>
    </reaction>
</comment>
<comment type="pathway">
    <text evidence="2">Glycan biosynthesis; trehalose biosynthesis.</text>
</comment>
<comment type="subunit">
    <text evidence="2">Homotetramer.</text>
</comment>
<comment type="similarity">
    <text evidence="2">Belongs to the glycosyltransferase 20 family.</text>
</comment>
<gene>
    <name evidence="2" type="primary">otsA</name>
    <name type="ordered locus">MAV_0666</name>
</gene>
<accession>A0QAK7</accession>
<sequence length="492" mass="55202">MAPGGGRGSKTASYGNSDFVVVANRLPVDQERLPDGSTAWKRSPGGLVTALEPLLRRQRGAWVGWPGIVDEDVDHEDDPIVQDDLELRPVKLSADDVAEYYEGFSNATLWPLYHDVIVKPIYHREWWDRYVAVNRRFAEATSRAAARGATVWVQDYQLQLVPAMLRELRPDLTIGFFLHIPFPPVELFMQLPWRTEIVKGLLGADLVGFHLTGGAQNFLFLSRRLIGANTSRGAVGVRSRYGEVELESRVVRVGAFPISIDSTALDQTARHRDIRRRAREIRAELGNPRKVLLGVDRLDYTKGIDVRLKAFSELLAEGRAKRDDTVLVQLATPSRERVDSYQQLRNDIERQVGHINGEYGEVGHPVVHYLHRPVPRNELIAFFVAADVMLVTPLRDGMNLVAKEYVACRSDLGGALVLSEFTGAAAELRQAYLVNPHDLEGVKDTVEAALNQSVEEGRRRMRSLRRQVLAHDVDRWARSFLDALAESGPRDG</sequence>
<evidence type="ECO:0000250" key="1">
    <source>
        <dbReference type="UniProtKB" id="P31677"/>
    </source>
</evidence>
<evidence type="ECO:0000250" key="2">
    <source>
        <dbReference type="UniProtKB" id="P9WN11"/>
    </source>
</evidence>
<reference key="1">
    <citation type="submission" date="2006-10" db="EMBL/GenBank/DDBJ databases">
        <authorList>
            <person name="Fleischmann R.D."/>
            <person name="Dodson R.J."/>
            <person name="Haft D.H."/>
            <person name="Merkel J.S."/>
            <person name="Nelson W.C."/>
            <person name="Fraser C.M."/>
        </authorList>
    </citation>
    <scope>NUCLEOTIDE SEQUENCE [LARGE SCALE GENOMIC DNA]</scope>
    <source>
        <strain>104</strain>
    </source>
</reference>